<sequence length="562" mass="62783">MDLPEGPVGGPTAEMYLRERPEEARLGMPVSLEEQILNSTFEACDPQRTGTVAVAQVLAYLEAVTGQGPQDARLQTLANSLDPNGEGPKATVDLDTFLVVMRDWIAACQLHGGLELEEETAFQGALTSRQLPSGCPEAEEPANLESFGGEDPRPELQATADLLSSLEDLELSNRRLVGENAKLQRSMETAEEGSARLGEEILALRKQLHSTQQALQFAKAMDEELEDLKTLARSLEEQNRSLLAQARQAEKEQQHLVAEMETLQEENGKLLAERDGVKKRSQELAMEKDTLKRQLFECEHLICQRDTILSERTRDVESLAQTLEEYRVTTQELRLEISRLEEQLSQTYEGPDELPEGAQLRRVGWTELLPPSLGLEIEAIRQKQEVATADLSNPLCGVWQWEEVIHETSEETEFPSEAPAGGQRNFQGEPAHPEEGRKEPSMWLTRREEEEDAESQVTADLPVPLGAPRPGDIPENPPERPARRELQQALVPVMKKLVPVRRRAWGQLCLPPQRLRVTRHPLIPAPVLGLLLLLLLSVLLLGPSPPPTWPHLQLCYLQPPPV</sequence>
<reference key="1">
    <citation type="journal article" date="2004" name="Nat. Genet.">
        <title>Complete sequencing and characterization of 21,243 full-length human cDNAs.</title>
        <authorList>
            <person name="Ota T."/>
            <person name="Suzuki Y."/>
            <person name="Nishikawa T."/>
            <person name="Otsuki T."/>
            <person name="Sugiyama T."/>
            <person name="Irie R."/>
            <person name="Wakamatsu A."/>
            <person name="Hayashi K."/>
            <person name="Sato H."/>
            <person name="Nagai K."/>
            <person name="Kimura K."/>
            <person name="Makita H."/>
            <person name="Sekine M."/>
            <person name="Obayashi M."/>
            <person name="Nishi T."/>
            <person name="Shibahara T."/>
            <person name="Tanaka T."/>
            <person name="Ishii S."/>
            <person name="Yamamoto J."/>
            <person name="Saito K."/>
            <person name="Kawai Y."/>
            <person name="Isono Y."/>
            <person name="Nakamura Y."/>
            <person name="Nagahari K."/>
            <person name="Murakami K."/>
            <person name="Yasuda T."/>
            <person name="Iwayanagi T."/>
            <person name="Wagatsuma M."/>
            <person name="Shiratori A."/>
            <person name="Sudo H."/>
            <person name="Hosoiri T."/>
            <person name="Kaku Y."/>
            <person name="Kodaira H."/>
            <person name="Kondo H."/>
            <person name="Sugawara M."/>
            <person name="Takahashi M."/>
            <person name="Kanda K."/>
            <person name="Yokoi T."/>
            <person name="Furuya T."/>
            <person name="Kikkawa E."/>
            <person name="Omura Y."/>
            <person name="Abe K."/>
            <person name="Kamihara K."/>
            <person name="Katsuta N."/>
            <person name="Sato K."/>
            <person name="Tanikawa M."/>
            <person name="Yamazaki M."/>
            <person name="Ninomiya K."/>
            <person name="Ishibashi T."/>
            <person name="Yamashita H."/>
            <person name="Murakawa K."/>
            <person name="Fujimori K."/>
            <person name="Tanai H."/>
            <person name="Kimata M."/>
            <person name="Watanabe M."/>
            <person name="Hiraoka S."/>
            <person name="Chiba Y."/>
            <person name="Ishida S."/>
            <person name="Ono Y."/>
            <person name="Takiguchi S."/>
            <person name="Watanabe S."/>
            <person name="Yosida M."/>
            <person name="Hotuta T."/>
            <person name="Kusano J."/>
            <person name="Kanehori K."/>
            <person name="Takahashi-Fujii A."/>
            <person name="Hara H."/>
            <person name="Tanase T.-O."/>
            <person name="Nomura Y."/>
            <person name="Togiya S."/>
            <person name="Komai F."/>
            <person name="Hara R."/>
            <person name="Takeuchi K."/>
            <person name="Arita M."/>
            <person name="Imose N."/>
            <person name="Musashino K."/>
            <person name="Yuuki H."/>
            <person name="Oshima A."/>
            <person name="Sasaki N."/>
            <person name="Aotsuka S."/>
            <person name="Yoshikawa Y."/>
            <person name="Matsunawa H."/>
            <person name="Ichihara T."/>
            <person name="Shiohata N."/>
            <person name="Sano S."/>
            <person name="Moriya S."/>
            <person name="Momiyama H."/>
            <person name="Satoh N."/>
            <person name="Takami S."/>
            <person name="Terashima Y."/>
            <person name="Suzuki O."/>
            <person name="Nakagawa S."/>
            <person name="Senoh A."/>
            <person name="Mizoguchi H."/>
            <person name="Goto Y."/>
            <person name="Shimizu F."/>
            <person name="Wakebe H."/>
            <person name="Hishigaki H."/>
            <person name="Watanabe T."/>
            <person name="Sugiyama A."/>
            <person name="Takemoto M."/>
            <person name="Kawakami B."/>
            <person name="Yamazaki M."/>
            <person name="Watanabe K."/>
            <person name="Kumagai A."/>
            <person name="Itakura S."/>
            <person name="Fukuzumi Y."/>
            <person name="Fujimori Y."/>
            <person name="Komiyama M."/>
            <person name="Tashiro H."/>
            <person name="Tanigami A."/>
            <person name="Fujiwara T."/>
            <person name="Ono T."/>
            <person name="Yamada K."/>
            <person name="Fujii Y."/>
            <person name="Ozaki K."/>
            <person name="Hirao M."/>
            <person name="Ohmori Y."/>
            <person name="Kawabata A."/>
            <person name="Hikiji T."/>
            <person name="Kobatake N."/>
            <person name="Inagaki H."/>
            <person name="Ikema Y."/>
            <person name="Okamoto S."/>
            <person name="Okitani R."/>
            <person name="Kawakami T."/>
            <person name="Noguchi S."/>
            <person name="Itoh T."/>
            <person name="Shigeta K."/>
            <person name="Senba T."/>
            <person name="Matsumura K."/>
            <person name="Nakajima Y."/>
            <person name="Mizuno T."/>
            <person name="Morinaga M."/>
            <person name="Sasaki M."/>
            <person name="Togashi T."/>
            <person name="Oyama M."/>
            <person name="Hata H."/>
            <person name="Watanabe M."/>
            <person name="Komatsu T."/>
            <person name="Mizushima-Sugano J."/>
            <person name="Satoh T."/>
            <person name="Shirai Y."/>
            <person name="Takahashi Y."/>
            <person name="Nakagawa K."/>
            <person name="Okumura K."/>
            <person name="Nagase T."/>
            <person name="Nomura N."/>
            <person name="Kikuchi H."/>
            <person name="Masuho Y."/>
            <person name="Yamashita R."/>
            <person name="Nakai K."/>
            <person name="Yada T."/>
            <person name="Nakamura Y."/>
            <person name="Ohara O."/>
            <person name="Isogai T."/>
            <person name="Sugano S."/>
        </authorList>
    </citation>
    <scope>NUCLEOTIDE SEQUENCE [LARGE SCALE MRNA]</scope>
    <source>
        <tissue>Testis</tissue>
    </source>
</reference>
<reference key="2">
    <citation type="journal article" date="2004" name="Nature">
        <title>The DNA sequence and biology of human chromosome 19.</title>
        <authorList>
            <person name="Grimwood J."/>
            <person name="Gordon L.A."/>
            <person name="Olsen A.S."/>
            <person name="Terry A."/>
            <person name="Schmutz J."/>
            <person name="Lamerdin J.E."/>
            <person name="Hellsten U."/>
            <person name="Goodstein D."/>
            <person name="Couronne O."/>
            <person name="Tran-Gyamfi M."/>
            <person name="Aerts A."/>
            <person name="Altherr M."/>
            <person name="Ashworth L."/>
            <person name="Bajorek E."/>
            <person name="Black S."/>
            <person name="Branscomb E."/>
            <person name="Caenepeel S."/>
            <person name="Carrano A.V."/>
            <person name="Caoile C."/>
            <person name="Chan Y.M."/>
            <person name="Christensen M."/>
            <person name="Cleland C.A."/>
            <person name="Copeland A."/>
            <person name="Dalin E."/>
            <person name="Dehal P."/>
            <person name="Denys M."/>
            <person name="Detter J.C."/>
            <person name="Escobar J."/>
            <person name="Flowers D."/>
            <person name="Fotopulos D."/>
            <person name="Garcia C."/>
            <person name="Georgescu A.M."/>
            <person name="Glavina T."/>
            <person name="Gomez M."/>
            <person name="Gonzales E."/>
            <person name="Groza M."/>
            <person name="Hammon N."/>
            <person name="Hawkins T."/>
            <person name="Haydu L."/>
            <person name="Ho I."/>
            <person name="Huang W."/>
            <person name="Israni S."/>
            <person name="Jett J."/>
            <person name="Kadner K."/>
            <person name="Kimball H."/>
            <person name="Kobayashi A."/>
            <person name="Larionov V."/>
            <person name="Leem S.-H."/>
            <person name="Lopez F."/>
            <person name="Lou Y."/>
            <person name="Lowry S."/>
            <person name="Malfatti S."/>
            <person name="Martinez D."/>
            <person name="McCready P.M."/>
            <person name="Medina C."/>
            <person name="Morgan J."/>
            <person name="Nelson K."/>
            <person name="Nolan M."/>
            <person name="Ovcharenko I."/>
            <person name="Pitluck S."/>
            <person name="Pollard M."/>
            <person name="Popkie A.P."/>
            <person name="Predki P."/>
            <person name="Quan G."/>
            <person name="Ramirez L."/>
            <person name="Rash S."/>
            <person name="Retterer J."/>
            <person name="Rodriguez A."/>
            <person name="Rogers S."/>
            <person name="Salamov A."/>
            <person name="Salazar A."/>
            <person name="She X."/>
            <person name="Smith D."/>
            <person name="Slezak T."/>
            <person name="Solovyev V."/>
            <person name="Thayer N."/>
            <person name="Tice H."/>
            <person name="Tsai M."/>
            <person name="Ustaszewska A."/>
            <person name="Vo N."/>
            <person name="Wagner M."/>
            <person name="Wheeler J."/>
            <person name="Wu K."/>
            <person name="Xie G."/>
            <person name="Yang J."/>
            <person name="Dubchak I."/>
            <person name="Furey T.S."/>
            <person name="DeJong P."/>
            <person name="Dickson M."/>
            <person name="Gordon D."/>
            <person name="Eichler E.E."/>
            <person name="Pennacchio L.A."/>
            <person name="Richardson P."/>
            <person name="Stubbs L."/>
            <person name="Rokhsar D.S."/>
            <person name="Myers R.M."/>
            <person name="Rubin E.M."/>
            <person name="Lucas S.M."/>
        </authorList>
    </citation>
    <scope>NUCLEOTIDE SEQUENCE [LARGE SCALE GENOMIC DNA]</scope>
</reference>
<reference key="3">
    <citation type="submission" date="2005-07" db="EMBL/GenBank/DDBJ databases">
        <authorList>
            <person name="Mural R.J."/>
            <person name="Istrail S."/>
            <person name="Sutton G.G."/>
            <person name="Florea L."/>
            <person name="Halpern A.L."/>
            <person name="Mobarry C.M."/>
            <person name="Lippert R."/>
            <person name="Walenz B."/>
            <person name="Shatkay H."/>
            <person name="Dew I."/>
            <person name="Miller J.R."/>
            <person name="Flanigan M.J."/>
            <person name="Edwards N.J."/>
            <person name="Bolanos R."/>
            <person name="Fasulo D."/>
            <person name="Halldorsson B.V."/>
            <person name="Hannenhalli S."/>
            <person name="Turner R."/>
            <person name="Yooseph S."/>
            <person name="Lu F."/>
            <person name="Nusskern D.R."/>
            <person name="Shue B.C."/>
            <person name="Zheng X.H."/>
            <person name="Zhong F."/>
            <person name="Delcher A.L."/>
            <person name="Huson D.H."/>
            <person name="Kravitz S.A."/>
            <person name="Mouchard L."/>
            <person name="Reinert K."/>
            <person name="Remington K.A."/>
            <person name="Clark A.G."/>
            <person name="Waterman M.S."/>
            <person name="Eichler E.E."/>
            <person name="Adams M.D."/>
            <person name="Hunkapiller M.W."/>
            <person name="Myers E.W."/>
            <person name="Venter J.C."/>
        </authorList>
    </citation>
    <scope>NUCLEOTIDE SEQUENCE [LARGE SCALE GENOMIC DNA]</scope>
</reference>
<reference key="4">
    <citation type="journal article" date="2004" name="Genome Res.">
        <title>The status, quality, and expansion of the NIH full-length cDNA project: the Mammalian Gene Collection (MGC).</title>
        <authorList>
            <consortium name="The MGC Project Team"/>
        </authorList>
    </citation>
    <scope>NUCLEOTIDE SEQUENCE [LARGE SCALE MRNA]</scope>
    <scope>VARIANT GLN-129</scope>
    <source>
        <tissue>Brain</tissue>
    </source>
</reference>
<reference key="5">
    <citation type="journal article" date="2018" name="Genet. Med.">
        <title>Point-of-care whole-exome sequencing of idiopathic male infertility.</title>
        <authorList>
            <person name="Fakhro K.A."/>
            <person name="Elbardisi H."/>
            <person name="Arafa M."/>
            <person name="Robay A."/>
            <person name="Rodriguez-Flores J.L."/>
            <person name="Al-Shakaki A."/>
            <person name="Syed N."/>
            <person name="Mezey J.G."/>
            <person name="Abi Khalil C."/>
            <person name="Malek J.A."/>
            <person name="Al-Ansari A."/>
            <person name="Al Said S."/>
            <person name="Crystal R.G."/>
        </authorList>
    </citation>
    <scope>INVOLVEMENT IN SPGF88</scope>
    <scope>VARIANT SPGF88 GLN-535</scope>
</reference>
<reference key="6">
    <citation type="journal article" date="2022" name="Hum. Genet.">
        <title>Homozygous missense mutation in CCDC155 disrupts the transmembrane distribution of CCDC155 and SUN1, resulting in non-obstructive azoospermia and premature ovarian insufficiency in humans.</title>
        <authorList>
            <person name="Wu H."/>
            <person name="Zhang X."/>
            <person name="Hua R."/>
            <person name="Li Y."/>
            <person name="Cheng L."/>
            <person name="Li K."/>
            <person name="Liu Y."/>
            <person name="Gao Y."/>
            <person name="Shen Q."/>
            <person name="Wang G."/>
            <person name="Lv M."/>
            <person name="Xu Y."/>
            <person name="He X."/>
            <person name="Cao Y."/>
            <person name="Liu M."/>
        </authorList>
    </citation>
    <scope>INVOLVEMENT IN SPGF88</scope>
    <scope>INVOLVEMENT IN POF22</scope>
    <scope>FUNCTION</scope>
    <scope>TISSUE SPECIFICITY</scope>
    <scope>SUBCELLULAR LOCATION</scope>
    <scope>VARIANT SPGF88 PRO-197</scope>
    <scope>CHARACTERIZATION OF VARIANT SPGF88 PRO-197</scope>
    <scope>VARIANT POF22 PRO-197</scope>
</reference>
<reference key="7">
    <citation type="journal article" date="2022" name="J. Clin. Endocrinol. Metab.">
        <title>Homozygous Variant in KASH5 Causes Premature Ovarian Insufficiency by Disordered Meiotic Homologous Pairing.</title>
        <authorList>
            <person name="Zhang Q."/>
            <person name="Tao C."/>
            <person name="Gao S."/>
            <person name="Li S."/>
            <person name="Xu B."/>
            <person name="Ke H."/>
            <person name="Wang Y."/>
            <person name="Zhang F."/>
            <person name="Qin Y."/>
            <person name="Zhang L."/>
            <person name="Guo T."/>
        </authorList>
    </citation>
    <scope>INVOLVEMENT IN POF22</scope>
    <scope>INTERACTION WITH SUN1</scope>
</reference>
<reference key="8">
    <citation type="journal article" date="2022" name="Mol. Hum. Reprod.">
        <title>Novel bi-allelic variants in KASH5 are associated with meiotic arrest and non-obstructive azoospermia.</title>
        <authorList>
            <person name="Yang C."/>
            <person name="Lin X."/>
            <person name="Ji Z."/>
            <person name="Huang Y."/>
            <person name="Zhang L."/>
            <person name="Luo J."/>
            <person name="Chen H."/>
            <person name="Li P."/>
            <person name="Tian R."/>
            <person name="Zhi E."/>
            <person name="Hong Y."/>
            <person name="Zhou Z."/>
            <person name="Zhang F."/>
            <person name="Li Z."/>
            <person name="Yao C."/>
        </authorList>
    </citation>
    <scope>INVOLVEMENT IN SPGF88</scope>
    <scope>TISSUE SPECIFICITY</scope>
</reference>
<reference key="9">
    <citation type="journal article" date="2023" name="Front. Endocrinol.">
        <title>A homozygous KASH5 frameshift mutation causes diminished ovarian reserve, recurrent miscarriage, and non-obstructive azoospermia in humans.</title>
        <authorList>
            <person name="Hou X."/>
            <person name="Zeb A."/>
            <person name="Dil S."/>
            <person name="Zhou J."/>
            <person name="Zhang H."/>
            <person name="Shi B."/>
            <person name="Muhammad Z."/>
            <person name="Khan I."/>
            <person name="Zaman Q."/>
            <person name="Shah W.A."/>
            <person name="Jiang X."/>
            <person name="Wu L."/>
            <person name="Ma H."/>
            <person name="Shi Q."/>
        </authorList>
    </citation>
    <scope>INVOLVEMENT IN SPGF88</scope>
    <scope>INVOLVEMENT IN POF22</scope>
</reference>
<name>KASH5_HUMAN</name>
<feature type="chain" id="PRO_0000331527" description="Protein KASH5">
    <location>
        <begin position="1"/>
        <end position="562"/>
    </location>
</feature>
<feature type="topological domain" description="Cytoplasmic" evidence="3">
    <location>
        <begin position="1"/>
        <end position="521"/>
    </location>
</feature>
<feature type="transmembrane region" description="Helical; Anchor for type IV membrane protein" evidence="3">
    <location>
        <begin position="522"/>
        <end position="542"/>
    </location>
</feature>
<feature type="topological domain" description="Perinuclear space" evidence="3">
    <location>
        <begin position="543"/>
        <end position="562"/>
    </location>
</feature>
<feature type="region of interest" description="Disordered" evidence="4">
    <location>
        <begin position="125"/>
        <end position="153"/>
    </location>
</feature>
<feature type="region of interest" description="Disordered" evidence="4">
    <location>
        <begin position="407"/>
        <end position="481"/>
    </location>
</feature>
<feature type="region of interest" description="Interaction with SUN1">
    <location>
        <begin position="541"/>
        <end position="562"/>
    </location>
</feature>
<feature type="coiled-coil region" evidence="3">
    <location>
        <begin position="164"/>
        <end position="349"/>
    </location>
</feature>
<feature type="compositionally biased region" description="Basic and acidic residues" evidence="4">
    <location>
        <begin position="431"/>
        <end position="448"/>
    </location>
</feature>
<feature type="sequence variant" id="VAR_059597" description="In dbSNP:rs8102582.">
    <original>L</original>
    <variation>P</variation>
    <location>
        <position position="116"/>
    </location>
</feature>
<feature type="sequence variant" id="VAR_059598" description="In dbSNP:rs10405154." evidence="5">
    <original>R</original>
    <variation>Q</variation>
    <location>
        <position position="129"/>
    </location>
</feature>
<feature type="sequence variant" id="VAR_089061" description="In POF22 and SPGF88; likely pathogenic; results in decreased meiotic attachment of telomeres to nuclear envelope in homozygous patient spermatocytes; reduced localization at the nuclear envelope." evidence="7">
    <original>L</original>
    <variation>P</variation>
    <location>
        <position position="197"/>
    </location>
</feature>
<feature type="sequence variant" id="VAR_089062" description="In SPGF88; uncertain significance; dbSNP:rs1439365177." evidence="6">
    <original>L</original>
    <variation>Q</variation>
    <location>
        <position position="535"/>
    </location>
</feature>
<feature type="strand" evidence="13">
    <location>
        <begin position="553"/>
        <end position="558"/>
    </location>
</feature>
<gene>
    <name evidence="12" type="primary">KASH5</name>
    <name type="synonym">CCDC155</name>
</gene>
<protein>
    <recommendedName>
        <fullName evidence="11">Protein KASH5</fullName>
    </recommendedName>
    <alternativeName>
        <fullName>Coiled-coil domain-containing protein 155</fullName>
    </alternativeName>
    <alternativeName>
        <fullName>KASH domain-containing protein 5</fullName>
    </alternativeName>
</protein>
<comment type="function">
    <text evidence="2 7">As a component of the LINC (LInker of Nucleoskeleton and Cytoskeleton) complex, involved in the connection between the nuclear lamina and the cytoskeleton. The nucleocytoplasmic interactions established by the LINC complex play an important role in the transmission of mechanical forces across the nuclear envelope and in nuclear movement and positioning. Required for telomere attachment to nuclear envelope in the prophase of meiosis (PubMed:35587281). Required for rapid telomere prophase movements implicating a SUN1/2:KASH5 LINC complex in which SUN1 and SUN2 seem to act at least partial redundantly. Required for homolog pairing during meiotic prophase in spermatocytes and probably oocytes. Essential for male and female gametogenesis (PubMed:35587281). Recruits cytoplasmic dynein to telomere attachment sites at the nuclear envelope in spermatocytes. In oocytes is involved in meiotic resumption and spindle formation.</text>
</comment>
<comment type="subunit">
    <text evidence="2 9">Core component the LINC complex which is composed of inner nuclear membrane SUN domain-containing proteins coupled to outer nuclear membrane KASH domain-containing nesprins. SUN and KASH domain-containing proteins seem to bind each other promiscuously; however, differentially expression of LINC complex constituents is giving rise to specific assemblies. At least SUN1/2-containing core LINC complexes are proposed to be hexameric composed of three protomers of each KASH and SUN domain-containing protein (By similarity). Interacts with SUN1; this interaction mediates its telomere localization by forming a SUN1:KASH5 LINC complex (PubMed:35708642). Component of a probable SUN2:KASH5 LINC complex. Self-associates. Interacts with DYNC1H1, DCTN1, DYNC1I1/2 and PAFAH1B1; suggesting the association with the dynein-dynactin motor complex (By similarity).</text>
</comment>
<comment type="interaction">
    <interactant intactId="EBI-749265">
        <id>Q8N6L0</id>
    </interactant>
    <interactant intactId="EBI-10293349">
        <id>Q96SE0</id>
        <label>ABHD1</label>
    </interactant>
    <organismsDiffer>false</organismsDiffer>
    <experiments>3</experiments>
</comment>
<comment type="interaction">
    <interactant intactId="EBI-749265">
        <id>Q8N6L0</id>
    </interactant>
    <interactant intactId="EBI-10174479">
        <id>A8K660</id>
        <label>ADIPOQ</label>
    </interactant>
    <organismsDiffer>false</organismsDiffer>
    <experiments>3</experiments>
</comment>
<comment type="interaction">
    <interactant intactId="EBI-749265">
        <id>Q8N6L0</id>
    </interactant>
    <interactant intactId="EBI-10827839">
        <id>Q15848</id>
        <label>ADIPOQ</label>
    </interactant>
    <organismsDiffer>false</organismsDiffer>
    <experiments>3</experiments>
</comment>
<comment type="interaction">
    <interactant intactId="EBI-749265">
        <id>Q8N6L0</id>
    </interactant>
    <interactant intactId="EBI-12109402">
        <id>Q86W74-2</id>
        <label>ANKRD46</label>
    </interactant>
    <organismsDiffer>false</organismsDiffer>
    <experiments>3</experiments>
</comment>
<comment type="interaction">
    <interactant intactId="EBI-749265">
        <id>Q8N6L0</id>
    </interactant>
    <interactant intactId="EBI-765623">
        <id>P17544</id>
        <label>ATF7</label>
    </interactant>
    <organismsDiffer>false</organismsDiffer>
    <experiments>3</experiments>
</comment>
<comment type="interaction">
    <interactant intactId="EBI-749265">
        <id>Q8N6L0</id>
    </interactant>
    <interactant intactId="EBI-356517">
        <id>Q9UL15</id>
        <label>BAG5</label>
    </interactant>
    <organismsDiffer>false</organismsDiffer>
    <experiments>6</experiments>
</comment>
<comment type="interaction">
    <interactant intactId="EBI-749265">
        <id>Q8N6L0</id>
    </interactant>
    <interactant intactId="EBI-707714">
        <id>Q92843</id>
        <label>BCL2L2</label>
    </interactant>
    <organismsDiffer>false</organismsDiffer>
    <experiments>8</experiments>
</comment>
<comment type="interaction">
    <interactant intactId="EBI-749265">
        <id>Q8N6L0</id>
    </interactant>
    <interactant intactId="EBI-749204">
        <id>O15155</id>
        <label>BET1</label>
    </interactant>
    <organismsDiffer>false</organismsDiffer>
    <experiments>3</experiments>
</comment>
<comment type="interaction">
    <interactant intactId="EBI-749265">
        <id>Q8N6L0</id>
    </interactant>
    <interactant intactId="EBI-10242927">
        <id>Q53XK0</id>
        <label>BET1</label>
    </interactant>
    <organismsDiffer>false</organismsDiffer>
    <experiments>3</experiments>
</comment>
<comment type="interaction">
    <interactant intactId="EBI-749265">
        <id>Q8N6L0</id>
    </interactant>
    <interactant intactId="EBI-744556">
        <id>Q96HB5</id>
        <label>CCDC120</label>
    </interactant>
    <organismsDiffer>false</organismsDiffer>
    <experiments>3</experiments>
</comment>
<comment type="interaction">
    <interactant intactId="EBI-749265">
        <id>Q8N6L0</id>
    </interactant>
    <interactant intactId="EBI-930143">
        <id>Q6P1J9</id>
        <label>CDC73</label>
    </interactant>
    <organismsDiffer>false</organismsDiffer>
    <experiments>6</experiments>
</comment>
<comment type="interaction">
    <interactant intactId="EBI-749265">
        <id>Q8N6L0</id>
    </interactant>
    <interactant intactId="EBI-3919850">
        <id>Q8IVW4</id>
        <label>CDKL3</label>
    </interactant>
    <organismsDiffer>false</organismsDiffer>
    <experiments>3</experiments>
</comment>
<comment type="interaction">
    <interactant intactId="EBI-749265">
        <id>Q8N6L0</id>
    </interactant>
    <interactant intactId="EBI-10292696">
        <id>Q96Q77</id>
        <label>CIB3</label>
    </interactant>
    <organismsDiffer>false</organismsDiffer>
    <experiments>3</experiments>
</comment>
<comment type="interaction">
    <interactant intactId="EBI-749265">
        <id>Q8N6L0</id>
    </interactant>
    <interactant intactId="EBI-10215641">
        <id>P56748</id>
        <label>CLDN8</label>
    </interactant>
    <organismsDiffer>false</organismsDiffer>
    <experiments>3</experiments>
</comment>
<comment type="interaction">
    <interactant intactId="EBI-749265">
        <id>Q8N6L0</id>
    </interactant>
    <interactant intactId="EBI-11522780">
        <id>Q96DZ9-2</id>
        <label>CMTM5</label>
    </interactant>
    <organismsDiffer>false</organismsDiffer>
    <experiments>3</experiments>
</comment>
<comment type="interaction">
    <interactant intactId="EBI-749265">
        <id>Q8N6L0</id>
    </interactant>
    <interactant intactId="EBI-10204806">
        <id>P29373</id>
        <label>CRABP2</label>
    </interactant>
    <organismsDiffer>false</organismsDiffer>
    <experiments>6</experiments>
</comment>
<comment type="interaction">
    <interactant intactId="EBI-749265">
        <id>Q8N6L0</id>
    </interactant>
    <interactant intactId="EBI-12019274">
        <id>Q4LDR2</id>
        <label>CTXN3</label>
    </interactant>
    <organismsDiffer>false</organismsDiffer>
    <experiments>3</experiments>
</comment>
<comment type="interaction">
    <interactant intactId="EBI-749265">
        <id>Q8N6L0</id>
    </interactant>
    <interactant intactId="EBI-5453285">
        <id>Q2TBE0</id>
        <label>CWF19L2</label>
    </interactant>
    <organismsDiffer>false</organismsDiffer>
    <experiments>3</experiments>
</comment>
<comment type="interaction">
    <interactant intactId="EBI-749265">
        <id>Q8N6L0</id>
    </interactant>
    <interactant intactId="EBI-3911467">
        <id>Q07325</id>
        <label>CXCL9</label>
    </interactant>
    <organismsDiffer>false</organismsDiffer>
    <experiments>3</experiments>
</comment>
<comment type="interaction">
    <interactant intactId="EBI-749265">
        <id>Q8N6L0</id>
    </interactant>
    <interactant intactId="EBI-2680384">
        <id>Q9BQA9</id>
        <label>CYBC1</label>
    </interactant>
    <organismsDiffer>false</organismsDiffer>
    <experiments>6</experiments>
</comment>
<comment type="interaction">
    <interactant intactId="EBI-749265">
        <id>Q8N6L0</id>
    </interactant>
    <interactant intactId="EBI-398977">
        <id>Q9BUN8</id>
        <label>DERL1</label>
    </interactant>
    <organismsDiffer>false</organismsDiffer>
    <experiments>3</experiments>
</comment>
<comment type="interaction">
    <interactant intactId="EBI-749265">
        <id>Q8N6L0</id>
    </interactant>
    <interactant intactId="EBI-8639143">
        <id>Q96LL9</id>
        <label>DNAJC30</label>
    </interactant>
    <organismsDiffer>false</organismsDiffer>
    <experiments>3</experiments>
</comment>
<comment type="interaction">
    <interactant intactId="EBI-749265">
        <id>Q8N6L0</id>
    </interactant>
    <interactant intactId="EBI-1753674">
        <id>P52803</id>
        <label>EFNA5</label>
    </interactant>
    <organismsDiffer>false</organismsDiffer>
    <experiments>3</experiments>
</comment>
<comment type="interaction">
    <interactant intactId="EBI-749265">
        <id>Q8N6L0</id>
    </interactant>
    <interactant intactId="EBI-489887">
        <id>P50402</id>
        <label>EMD</label>
    </interactant>
    <organismsDiffer>false</organismsDiffer>
    <experiments>8</experiments>
</comment>
<comment type="interaction">
    <interactant intactId="EBI-749265">
        <id>Q8N6L0</id>
    </interactant>
    <interactant intactId="EBI-719941">
        <id>Q3B820</id>
        <label>FAM161A</label>
    </interactant>
    <organismsDiffer>false</organismsDiffer>
    <experiments>3</experiments>
</comment>
<comment type="interaction">
    <interactant intactId="EBI-749265">
        <id>Q8N6L0</id>
    </interactant>
    <interactant intactId="EBI-12118888">
        <id>Q96D05-2</id>
        <label>FAM241B</label>
    </interactant>
    <organismsDiffer>false</organismsDiffer>
    <experiments>3</experiments>
</comment>
<comment type="interaction">
    <interactant intactId="EBI-749265">
        <id>Q8N6L0</id>
    </interactant>
    <interactant intactId="EBI-742802">
        <id>Q9Y247</id>
        <label>FAM50B</label>
    </interactant>
    <organismsDiffer>false</organismsDiffer>
    <experiments>3</experiments>
</comment>
<comment type="interaction">
    <interactant intactId="EBI-749265">
        <id>Q8N6L0</id>
    </interactant>
    <interactant intactId="EBI-6658203">
        <id>Q86YD7</id>
        <label>FAM90A1</label>
    </interactant>
    <organismsDiffer>false</organismsDiffer>
    <experiments>3</experiments>
</comment>
<comment type="interaction">
    <interactant intactId="EBI-749265">
        <id>Q8N6L0</id>
    </interactant>
    <interactant intactId="EBI-743099">
        <id>Q969F0</id>
        <label>FATE1</label>
    </interactant>
    <organismsDiffer>false</organismsDiffer>
    <experiments>6</experiments>
</comment>
<comment type="interaction">
    <interactant intactId="EBI-749265">
        <id>Q8N6L0</id>
    </interactant>
    <interactant intactId="EBI-3385283">
        <id>Q9Y3D6</id>
        <label>FIS1</label>
    </interactant>
    <organismsDiffer>false</organismsDiffer>
    <experiments>3</experiments>
</comment>
<comment type="interaction">
    <interactant intactId="EBI-749265">
        <id>Q8N6L0</id>
    </interactant>
    <interactant intactId="EBI-710176">
        <id>Q70Z53</id>
        <label>FRA10AC1</label>
    </interactant>
    <organismsDiffer>false</organismsDiffer>
    <experiments>3</experiments>
</comment>
<comment type="interaction">
    <interactant intactId="EBI-749265">
        <id>Q8N6L0</id>
    </interactant>
    <interactant intactId="EBI-10192648">
        <id>O95954</id>
        <label>FTCD</label>
    </interactant>
    <organismsDiffer>false</organismsDiffer>
    <experiments>3</experiments>
</comment>
<comment type="interaction">
    <interactant intactId="EBI-749265">
        <id>Q8N6L0</id>
    </interactant>
    <interactant intactId="EBI-12175685">
        <id>Q14802-3</id>
        <label>FXYD3</label>
    </interactant>
    <organismsDiffer>false</organismsDiffer>
    <experiments>3</experiments>
</comment>
<comment type="interaction">
    <interactant intactId="EBI-749265">
        <id>Q8N6L0</id>
    </interactant>
    <interactant intactId="EBI-720116">
        <id>P60520</id>
        <label>GABARAPL2</label>
    </interactant>
    <organismsDiffer>false</organismsDiffer>
    <experiments>3</experiments>
</comment>
<comment type="interaction">
    <interactant intactId="EBI-749265">
        <id>Q8N6L0</id>
    </interactant>
    <interactant intactId="EBI-10226985">
        <id>Q10471</id>
        <label>GALNT2</label>
    </interactant>
    <organismsDiffer>false</organismsDiffer>
    <experiments>8</experiments>
</comment>
<comment type="interaction">
    <interactant intactId="EBI-749265">
        <id>Q8N6L0</id>
    </interactant>
    <interactant intactId="EBI-6166686">
        <id>Q96F15</id>
        <label>GIMAP5</label>
    </interactant>
    <organismsDiffer>false</organismsDiffer>
    <experiments>3</experiments>
</comment>
<comment type="interaction">
    <interactant intactId="EBI-749265">
        <id>Q8N6L0</id>
    </interactant>
    <interactant intactId="EBI-4401517">
        <id>O14653</id>
        <label>GOSR2</label>
    </interactant>
    <organismsDiffer>false</organismsDiffer>
    <experiments>6</experiments>
</comment>
<comment type="interaction">
    <interactant intactId="EBI-749265">
        <id>Q8N6L0</id>
    </interactant>
    <interactant intactId="EBI-2372076">
        <id>Q5T3I0</id>
        <label>GPATCH4</label>
    </interactant>
    <organismsDiffer>false</organismsDiffer>
    <experiments>6</experiments>
</comment>
<comment type="interaction">
    <interactant intactId="EBI-749265">
        <id>Q8N6L0</id>
    </interactant>
    <interactant intactId="EBI-10178951">
        <id>O00155</id>
        <label>GPR25</label>
    </interactant>
    <organismsDiffer>false</organismsDiffer>
    <experiments>6</experiments>
</comment>
<comment type="interaction">
    <interactant intactId="EBI-749265">
        <id>Q8N6L0</id>
    </interactant>
    <interactant intactId="EBI-10284700">
        <id>Q96DI8</id>
        <label>HMOX1</label>
    </interactant>
    <organismsDiffer>false</organismsDiffer>
    <experiments>3</experiments>
</comment>
<comment type="interaction">
    <interactant intactId="EBI-749265">
        <id>Q8N6L0</id>
    </interactant>
    <interactant intactId="EBI-2568251">
        <id>P11215</id>
        <label>ITGAM</label>
    </interactant>
    <organismsDiffer>false</organismsDiffer>
    <experiments>3</experiments>
</comment>
<comment type="interaction">
    <interactant intactId="EBI-749265">
        <id>Q8N6L0</id>
    </interactant>
    <interactant intactId="EBI-2866431">
        <id>Q9Y287</id>
        <label>ITM2B</label>
    </interactant>
    <organismsDiffer>false</organismsDiffer>
    <experiments>3</experiments>
</comment>
<comment type="interaction">
    <interactant intactId="EBI-749265">
        <id>Q8N6L0</id>
    </interactant>
    <interactant intactId="EBI-10266796">
        <id>Q8N5M9</id>
        <label>JAGN1</label>
    </interactant>
    <organismsDiffer>false</organismsDiffer>
    <experiments>6</experiments>
</comment>
<comment type="interaction">
    <interactant intactId="EBI-749265">
        <id>Q8N6L0</id>
    </interactant>
    <interactant intactId="EBI-1052114">
        <id>Q6PKG0</id>
        <label>LARP1</label>
    </interactant>
    <organismsDiffer>false</organismsDiffer>
    <experiments>3</experiments>
</comment>
<comment type="interaction">
    <interactant intactId="EBI-749265">
        <id>Q8N6L0</id>
    </interactant>
    <interactant intactId="EBI-726510">
        <id>Q96BZ8</id>
        <label>LENG1</label>
    </interactant>
    <organismsDiffer>false</organismsDiffer>
    <experiments>3</experiments>
</comment>
<comment type="interaction">
    <interactant intactId="EBI-749265">
        <id>Q8N6L0</id>
    </interactant>
    <interactant intactId="EBI-2820517">
        <id>Q8TAF8</id>
        <label>LHFPL5</label>
    </interactant>
    <organismsDiffer>false</organismsDiffer>
    <experiments>9</experiments>
</comment>
<comment type="interaction">
    <interactant intactId="EBI-749265">
        <id>Q8N6L0</id>
    </interactant>
    <interactant intactId="EBI-718707">
        <id>O75427</id>
        <label>LRCH4</label>
    </interactant>
    <organismsDiffer>false</organismsDiffer>
    <experiments>3</experiments>
</comment>
<comment type="interaction">
    <interactant intactId="EBI-749265">
        <id>Q8N6L0</id>
    </interactant>
    <interactant intactId="EBI-750078">
        <id>Q13021</id>
        <label>MALL</label>
    </interactant>
    <organismsDiffer>false</organismsDiffer>
    <experiments>3</experiments>
</comment>
<comment type="interaction">
    <interactant intactId="EBI-749265">
        <id>Q8N6L0</id>
    </interactant>
    <interactant intactId="EBI-10317612">
        <id>Q9P0N8</id>
        <label>MARCHF2</label>
    </interactant>
    <organismsDiffer>false</organismsDiffer>
    <experiments>3</experiments>
</comment>
<comment type="interaction">
    <interactant intactId="EBI-749265">
        <id>Q8N6L0</id>
    </interactant>
    <interactant intactId="EBI-3920969">
        <id>Q6N075</id>
        <label>MFSD5</label>
    </interactant>
    <organismsDiffer>false</organismsDiffer>
    <experiments>3</experiments>
</comment>
<comment type="interaction">
    <interactant intactId="EBI-749265">
        <id>Q8N6L0</id>
    </interactant>
    <interactant intactId="EBI-992788">
        <id>P50281</id>
        <label>MMP14</label>
    </interactant>
    <organismsDiffer>false</organismsDiffer>
    <experiments>3</experiments>
</comment>
<comment type="interaction">
    <interactant intactId="EBI-749265">
        <id>Q8N6L0</id>
    </interactant>
    <interactant intactId="EBI-12179105">
        <id>O75425</id>
        <label>MOSPD3</label>
    </interactant>
    <organismsDiffer>false</organismsDiffer>
    <experiments>3</experiments>
</comment>
<comment type="interaction">
    <interactant intactId="EBI-749265">
        <id>Q8N6L0</id>
    </interactant>
    <interactant intactId="EBI-2808234">
        <id>P11836</id>
        <label>MS4A1</label>
    </interactant>
    <organismsDiffer>false</organismsDiffer>
    <experiments>3</experiments>
</comment>
<comment type="interaction">
    <interactant intactId="EBI-749265">
        <id>Q8N6L0</id>
    </interactant>
    <interactant intactId="EBI-7415268">
        <id>O75431</id>
        <label>MTX2</label>
    </interactant>
    <organismsDiffer>false</organismsDiffer>
    <experiments>6</experiments>
</comment>
<comment type="interaction">
    <interactant intactId="EBI-749265">
        <id>Q8N6L0</id>
    </interactant>
    <interactant intactId="EBI-12051377">
        <id>Q8N912</id>
        <label>NRAC</label>
    </interactant>
    <organismsDiffer>false</organismsDiffer>
    <experiments>3</experiments>
</comment>
<comment type="interaction">
    <interactant intactId="EBI-749265">
        <id>Q8N6L0</id>
    </interactant>
    <interactant intactId="EBI-10311735">
        <id>Q9NQ35</id>
        <label>NRIP3</label>
    </interactant>
    <organismsDiffer>false</organismsDiffer>
    <experiments>6</experiments>
</comment>
<comment type="interaction">
    <interactant intactId="EBI-749265">
        <id>Q8N6L0</id>
    </interactant>
    <interactant intactId="EBI-6380741">
        <id>P42857</id>
        <label>NSG1</label>
    </interactant>
    <organismsDiffer>false</organismsDiffer>
    <experiments>6</experiments>
</comment>
<comment type="interaction">
    <interactant intactId="EBI-749265">
        <id>Q8N6L0</id>
    </interactant>
    <interactant intactId="EBI-2804156">
        <id>Q6UX06</id>
        <label>OLFM4</label>
    </interactant>
    <organismsDiffer>false</organismsDiffer>
    <experiments>3</experiments>
</comment>
<comment type="interaction">
    <interactant intactId="EBI-749265">
        <id>Q8N6L0</id>
    </interactant>
    <interactant intactId="EBI-2861522">
        <id>P16234</id>
        <label>PDGFRA</label>
    </interactant>
    <organismsDiffer>false</organismsDiffer>
    <experiments>3</experiments>
</comment>
<comment type="interaction">
    <interactant intactId="EBI-749265">
        <id>Q8N6L0</id>
    </interactant>
    <interactant intactId="EBI-12092917">
        <id>Q9UHJ9-5</id>
        <label>PGAP2</label>
    </interactant>
    <organismsDiffer>false</organismsDiffer>
    <experiments>3</experiments>
</comment>
<comment type="interaction">
    <interactant intactId="EBI-749265">
        <id>Q8N6L0</id>
    </interactant>
    <interactant intactId="EBI-1045534">
        <id>O00264</id>
        <label>PGRMC1</label>
    </interactant>
    <organismsDiffer>false</organismsDiffer>
    <experiments>3</experiments>
</comment>
<comment type="interaction">
    <interactant intactId="EBI-749265">
        <id>Q8N6L0</id>
    </interactant>
    <interactant intactId="EBI-11290294">
        <id>Q9H490</id>
        <label>PIGU</label>
    </interactant>
    <organismsDiffer>false</organismsDiffer>
    <experiments>3</experiments>
</comment>
<comment type="interaction">
    <interactant intactId="EBI-749265">
        <id>Q8N6L0</id>
    </interactant>
    <interactant intactId="EBI-608347">
        <id>Q04941</id>
        <label>PLP2</label>
    </interactant>
    <organismsDiffer>false</organismsDiffer>
    <experiments>3</experiments>
</comment>
<comment type="interaction">
    <interactant intactId="EBI-749265">
        <id>Q8N6L0</id>
    </interactant>
    <interactant intactId="EBI-11721828">
        <id>Q8IY26</id>
        <label>PLPP6</label>
    </interactant>
    <organismsDiffer>false</organismsDiffer>
    <experiments>3</experiments>
</comment>
<comment type="interaction">
    <interactant intactId="EBI-749265">
        <id>Q8N6L0</id>
    </interactant>
    <interactant intactId="EBI-2557469">
        <id>Q6NYC8</id>
        <label>PPP1R18</label>
    </interactant>
    <organismsDiffer>false</organismsDiffer>
    <experiments>6</experiments>
</comment>
<comment type="interaction">
    <interactant intactId="EBI-749265">
        <id>Q8N6L0</id>
    </interactant>
    <interactant intactId="EBI-10246897">
        <id>Q5TAB7</id>
        <label>RIPPLY2</label>
    </interactant>
    <organismsDiffer>false</organismsDiffer>
    <experiments>8</experiments>
</comment>
<comment type="interaction">
    <interactant intactId="EBI-749265">
        <id>Q8N6L0</id>
    </interactant>
    <interactant intactId="EBI-722397">
        <id>Q9NTX7</id>
        <label>RNF146</label>
    </interactant>
    <organismsDiffer>false</organismsDiffer>
    <experiments>3</experiments>
</comment>
<comment type="interaction">
    <interactant intactId="EBI-749265">
        <id>Q8N6L0</id>
    </interactant>
    <interactant intactId="EBI-11750630">
        <id>Q9NTX7-2</id>
        <label>RNF146</label>
    </interactant>
    <organismsDiffer>false</organismsDiffer>
    <experiments>7</experiments>
</comment>
<comment type="interaction">
    <interactant intactId="EBI-749265">
        <id>Q8N6L0</id>
    </interactant>
    <interactant intactId="EBI-748350">
        <id>Q9UHP6</id>
        <label>RSPH14</label>
    </interactant>
    <organismsDiffer>false</organismsDiffer>
    <experiments>3</experiments>
</comment>
<comment type="interaction">
    <interactant intactId="EBI-749265">
        <id>Q8N6L0</id>
    </interactant>
    <interactant intactId="EBI-10256202">
        <id>Q7L4I2-2</id>
        <label>RSRC2</label>
    </interactant>
    <organismsDiffer>false</organismsDiffer>
    <experiments>3</experiments>
</comment>
<comment type="interaction">
    <interactant intactId="EBI-749265">
        <id>Q8N6L0</id>
    </interactant>
    <interactant intactId="EBI-10244780">
        <id>Q5QGT7</id>
        <label>RTP2</label>
    </interactant>
    <organismsDiffer>false</organismsDiffer>
    <experiments>3</experiments>
</comment>
<comment type="interaction">
    <interactant intactId="EBI-749265">
        <id>Q8N6L0</id>
    </interactant>
    <interactant intactId="EBI-714881">
        <id>Q9HC62</id>
        <label>SENP2</label>
    </interactant>
    <organismsDiffer>false</organismsDiffer>
    <experiments>6</experiments>
</comment>
<comment type="interaction">
    <interactant intactId="EBI-749265">
        <id>Q8N6L0</id>
    </interactant>
    <interactant intactId="EBI-749270">
        <id>Q8N6R1</id>
        <label>SERP2</label>
    </interactant>
    <organismsDiffer>false</organismsDiffer>
    <experiments>6</experiments>
</comment>
<comment type="interaction">
    <interactant intactId="EBI-749265">
        <id>Q8N6L0</id>
    </interactant>
    <interactant intactId="EBI-347996">
        <id>O43765</id>
        <label>SGTA</label>
    </interactant>
    <organismsDiffer>false</organismsDiffer>
    <experiments>8</experiments>
</comment>
<comment type="interaction">
    <interactant intactId="EBI-749265">
        <id>Q8N6L0</id>
    </interactant>
    <interactant intactId="EBI-8644112">
        <id>Q9BRI3</id>
        <label>SLC30A2</label>
    </interactant>
    <organismsDiffer>false</organismsDiffer>
    <experiments>9</experiments>
</comment>
<comment type="interaction">
    <interactant intactId="EBI-749265">
        <id>Q8N6L0</id>
    </interactant>
    <interactant intactId="EBI-10281213">
        <id>Q969S0</id>
        <label>SLC35B4</label>
    </interactant>
    <organismsDiffer>false</organismsDiffer>
    <experiments>3</experiments>
</comment>
<comment type="interaction">
    <interactant intactId="EBI-749265">
        <id>Q8N6L0</id>
    </interactant>
    <interactant intactId="EBI-12266234">
        <id>Q8IVJ1</id>
        <label>SLC41A1</label>
    </interactant>
    <organismsDiffer>false</organismsDiffer>
    <experiments>3</experiments>
</comment>
<comment type="interaction">
    <interactant intactId="EBI-749265">
        <id>Q8N6L0</id>
    </interactant>
    <interactant intactId="EBI-10290130">
        <id>Q96JW4</id>
        <label>SLC41A2</label>
    </interactant>
    <organismsDiffer>false</organismsDiffer>
    <experiments>6</experiments>
</comment>
<comment type="interaction">
    <interactant intactId="EBI-749265">
        <id>Q8N6L0</id>
    </interactant>
    <interactant intactId="EBI-12409133">
        <id>Q9NY91</id>
        <label>SLC5A4</label>
    </interactant>
    <organismsDiffer>false</organismsDiffer>
    <experiments>3</experiments>
</comment>
<comment type="interaction">
    <interactant intactId="EBI-749265">
        <id>Q8N6L0</id>
    </interactant>
    <interactant intactId="EBI-10180786">
        <id>O00631</id>
        <label>SLN</label>
    </interactant>
    <organismsDiffer>false</organismsDiffer>
    <experiments>3</experiments>
</comment>
<comment type="interaction">
    <interactant intactId="EBI-749265">
        <id>Q8N6L0</id>
    </interactant>
    <interactant intactId="EBI-8640191">
        <id>Q9NRQ5</id>
        <label>SMCO4</label>
    </interactant>
    <organismsDiffer>false</organismsDiffer>
    <experiments>3</experiments>
</comment>
<comment type="interaction">
    <interactant intactId="EBI-749265">
        <id>Q8N6L0</id>
    </interactant>
    <interactant intactId="EBI-10244848">
        <id>Q5SQN1</id>
        <label>SNAP47</label>
    </interactant>
    <organismsDiffer>false</organismsDiffer>
    <experiments>3</experiments>
</comment>
<comment type="interaction">
    <interactant intactId="EBI-749265">
        <id>Q8N6L0</id>
    </interactant>
    <interactant intactId="EBI-2947137">
        <id>O95210</id>
        <label>STBD1</label>
    </interactant>
    <organismsDiffer>false</organismsDiffer>
    <experiments>3</experiments>
</comment>
<comment type="interaction">
    <interactant intactId="EBI-749265">
        <id>Q8N6L0</id>
    </interactant>
    <interactant intactId="EBI-2691717">
        <id>Q86Y82</id>
        <label>STX12</label>
    </interactant>
    <organismsDiffer>false</organismsDiffer>
    <experiments>3</experiments>
</comment>
<comment type="interaction">
    <interactant intactId="EBI-749265">
        <id>Q8N6L0</id>
    </interactant>
    <interactant intactId="EBI-714206">
        <id>Q13190</id>
        <label>STX5</label>
    </interactant>
    <organismsDiffer>false</organismsDiffer>
    <experiments>6</experiments>
</comment>
<comment type="interaction">
    <interactant intactId="EBI-749265">
        <id>Q8N6L0</id>
    </interactant>
    <interactant intactId="EBI-2796904">
        <id>O94901</id>
        <label>SUN1</label>
    </interactant>
    <organismsDiffer>false</organismsDiffer>
    <experiments>5</experiments>
</comment>
<comment type="interaction">
    <interactant intactId="EBI-749265">
        <id>Q8N6L0</id>
    </interactant>
    <interactant intactId="EBI-1044964">
        <id>Q9UH99</id>
        <label>SUN2</label>
    </interactant>
    <organismsDiffer>false</organismsDiffer>
    <experiments>3</experiments>
</comment>
<comment type="interaction">
    <interactant intactId="EBI-749265">
        <id>Q8N6L0</id>
    </interactant>
    <interactant intactId="EBI-745182">
        <id>Q9BQ70</id>
        <label>TCF25</label>
    </interactant>
    <organismsDiffer>false</organismsDiffer>
    <experiments>3</experiments>
</comment>
<comment type="interaction">
    <interactant intactId="EBI-749265">
        <id>Q8N6L0</id>
    </interactant>
    <interactant intactId="EBI-723946">
        <id>P17152</id>
        <label>TMEM11</label>
    </interactant>
    <organismsDiffer>false</organismsDiffer>
    <experiments>5</experiments>
</comment>
<comment type="interaction">
    <interactant intactId="EBI-749265">
        <id>Q8N6L0</id>
    </interactant>
    <interactant intactId="EBI-348587">
        <id>Q9BVK8</id>
        <label>TMEM147</label>
    </interactant>
    <organismsDiffer>false</organismsDiffer>
    <experiments>3</experiments>
</comment>
<comment type="interaction">
    <interactant intactId="EBI-749265">
        <id>Q8N6L0</id>
    </interactant>
    <interactant intactId="EBI-2339195">
        <id>Q9P0S9</id>
        <label>TMEM14C</label>
    </interactant>
    <organismsDiffer>false</organismsDiffer>
    <experiments>3</experiments>
</comment>
<comment type="interaction">
    <interactant intactId="EBI-749265">
        <id>Q8N6L0</id>
    </interactant>
    <interactant intactId="EBI-741829">
        <id>Q96HH6</id>
        <label>TMEM19</label>
    </interactant>
    <organismsDiffer>false</organismsDiffer>
    <experiments>3</experiments>
</comment>
<comment type="interaction">
    <interactant intactId="EBI-749265">
        <id>Q8N6L0</id>
    </interactant>
    <interactant intactId="EBI-10265825">
        <id>Q8N511</id>
        <label>TMEM199</label>
    </interactant>
    <organismsDiffer>false</organismsDiffer>
    <experiments>3</experiments>
</comment>
<comment type="interaction">
    <interactant intactId="EBI-749265">
        <id>Q8N6L0</id>
    </interactant>
    <interactant intactId="EBI-10288884">
        <id>Q96HV5</id>
        <label>TMEM41A</label>
    </interactant>
    <organismsDiffer>false</organismsDiffer>
    <experiments>3</experiments>
</comment>
<comment type="interaction">
    <interactant intactId="EBI-749265">
        <id>Q8N6L0</id>
    </interactant>
    <interactant intactId="EBI-12015604">
        <id>Q8N2M4</id>
        <label>TMEM86A</label>
    </interactant>
    <organismsDiffer>false</organismsDiffer>
    <experiments>3</experiments>
</comment>
<comment type="interaction">
    <interactant intactId="EBI-749265">
        <id>Q8N6L0</id>
    </interactant>
    <interactant intactId="EBI-10313040">
        <id>Q9NRS4</id>
        <label>TMPRSS4</label>
    </interactant>
    <organismsDiffer>false</organismsDiffer>
    <experiments>3</experiments>
</comment>
<comment type="interaction">
    <interactant intactId="EBI-749265">
        <id>Q8N6L0</id>
    </interactant>
    <interactant intactId="EBI-10312990">
        <id>Q9NRS4-3</id>
        <label>TMPRSS4</label>
    </interactant>
    <organismsDiffer>false</organismsDiffer>
    <experiments>3</experiments>
</comment>
<comment type="interaction">
    <interactant intactId="EBI-749265">
        <id>Q8N6L0</id>
    </interactant>
    <interactant intactId="EBI-359977">
        <id>P01375</id>
        <label>TNF</label>
    </interactant>
    <organismsDiffer>false</organismsDiffer>
    <experiments>3</experiments>
</comment>
<comment type="interaction">
    <interactant intactId="EBI-749265">
        <id>Q8N6L0</id>
    </interactant>
    <interactant intactId="EBI-765817">
        <id>Q9Y228</id>
        <label>TRAF3IP3</label>
    </interactant>
    <organismsDiffer>false</organismsDiffer>
    <experiments>6</experiments>
</comment>
<comment type="interaction">
    <interactant intactId="EBI-749265">
        <id>Q8N6L0</id>
    </interactant>
    <interactant intactId="EBI-9053916">
        <id>Q63HK5</id>
        <label>TSHZ3</label>
    </interactant>
    <organismsDiffer>false</organismsDiffer>
    <experiments>3</experiments>
</comment>
<comment type="interaction">
    <interactant intactId="EBI-749265">
        <id>Q8N6L0</id>
    </interactant>
    <interactant intactId="EBI-9090990">
        <id>Q5W5X9-3</id>
        <label>TTC23</label>
    </interactant>
    <organismsDiffer>false</organismsDiffer>
    <experiments>3</experiments>
</comment>
<comment type="interaction">
    <interactant intactId="EBI-749265">
        <id>Q8N6L0</id>
    </interactant>
    <interactant intactId="EBI-11988865">
        <id>A5PKU2</id>
        <label>TUSC5</label>
    </interactant>
    <organismsDiffer>false</organismsDiffer>
    <experiments>3</experiments>
</comment>
<comment type="interaction">
    <interactant intactId="EBI-749265">
        <id>Q8N6L0</id>
    </interactant>
    <interactant intactId="EBI-12237619">
        <id>O75841</id>
        <label>UPK1B</label>
    </interactant>
    <organismsDiffer>false</organismsDiffer>
    <experiments>3</experiments>
</comment>
<comment type="interaction">
    <interactant intactId="EBI-749265">
        <id>Q8N6L0</id>
    </interactant>
    <interactant intactId="EBI-10179682">
        <id>O00526</id>
        <label>UPK2</label>
    </interactant>
    <organismsDiffer>false</organismsDiffer>
    <experiments>3</experiments>
</comment>
<comment type="interaction">
    <interactant intactId="EBI-749265">
        <id>Q8N6L0</id>
    </interactant>
    <interactant intactId="EBI-10201335">
        <id>P23763</id>
        <label>VAMP1</label>
    </interactant>
    <organismsDiffer>false</organismsDiffer>
    <experiments>3</experiments>
</comment>
<comment type="interaction">
    <interactant intactId="EBI-749265">
        <id>Q8N6L0</id>
    </interactant>
    <interactant intactId="EBI-520113">
        <id>P63027</id>
        <label>VAMP2</label>
    </interactant>
    <organismsDiffer>false</organismsDiffer>
    <experiments>3</experiments>
</comment>
<comment type="interaction">
    <interactant intactId="EBI-749265">
        <id>Q8N6L0</id>
    </interactant>
    <interactant intactId="EBI-744953">
        <id>O75379</id>
        <label>VAMP4</label>
    </interactant>
    <organismsDiffer>false</organismsDiffer>
    <experiments>3</experiments>
</comment>
<comment type="interaction">
    <interactant intactId="EBI-749265">
        <id>Q8N6L0</id>
    </interactant>
    <interactant intactId="EBI-10187996">
        <id>O75379-2</id>
        <label>VAMP4</label>
    </interactant>
    <organismsDiffer>false</organismsDiffer>
    <experiments>3</experiments>
</comment>
<comment type="interaction">
    <interactant intactId="EBI-749265">
        <id>Q8N6L0</id>
    </interactant>
    <interactant intactId="EBI-723716">
        <id>Q9UEU0</id>
        <label>VTI1B</label>
    </interactant>
    <organismsDiffer>false</organismsDiffer>
    <experiments>3</experiments>
</comment>
<comment type="interaction">
    <interactant intactId="EBI-749265">
        <id>Q8N6L0</id>
    </interactant>
    <interactant intactId="EBI-14104088">
        <id>Q53FD0-2</id>
        <label>ZC2HC1C</label>
    </interactant>
    <organismsDiffer>false</organismsDiffer>
    <experiments>3</experiments>
</comment>
<comment type="interaction">
    <interactant intactId="EBI-749265">
        <id>Q8N6L0</id>
    </interactant>
    <interactant intactId="EBI-718439">
        <id>O95159</id>
        <label>ZFPL1</label>
    </interactant>
    <organismsDiffer>false</organismsDiffer>
    <experiments>3</experiments>
</comment>
<comment type="interaction">
    <interactant intactId="EBI-749265">
        <id>Q8N6L0</id>
    </interactant>
    <interactant intactId="EBI-10177272">
        <id>P15622-3</id>
        <label>ZNF250</label>
    </interactant>
    <organismsDiffer>false</organismsDiffer>
    <experiments>3</experiments>
</comment>
<comment type="interaction">
    <interactant intactId="EBI-749265">
        <id>Q8N6L0</id>
    </interactant>
    <interactant intactId="EBI-10175711">
        <id>B2R9H7</id>
    </interactant>
    <organismsDiffer>false</organismsDiffer>
    <experiments>3</experiments>
</comment>
<comment type="subcellular location">
    <subcellularLocation>
        <location evidence="2 11">Nucleus outer membrane</location>
        <topology evidence="11">Single-pass type IV membrane protein</topology>
        <orientation evidence="11">Cytoplasmic side</orientation>
    </subcellularLocation>
    <subcellularLocation>
        <location evidence="2">Nucleus</location>
    </subcellularLocation>
    <subcellularLocation>
        <location evidence="2">Chromosome</location>
        <location evidence="2">Telomere</location>
    </subcellularLocation>
    <subcellularLocation>
        <location evidence="7">Nucleus envelope</location>
    </subcellularLocation>
    <text evidence="2">Localized exclusively at telomeres from the leptotene to diplotene stages. Colocalizes with SUN2 at sites of telomere attachment in meiocytes. At oocyte MI stage localized around the spindle, at MII stage localized to the spindle poles.</text>
</comment>
<comment type="tissue specificity">
    <text evidence="7 8">Expressed in testis (at protein level).</text>
</comment>
<comment type="domain">
    <text evidence="1">The C-terminal 22 AA is required and sufficient for localization to telomeres at the nuclear envelope.</text>
</comment>
<comment type="disease" evidence="6 7 8 10">
    <disease id="DI-06781">
        <name>Spermatogenic failure 88</name>
        <acronym>SPGF88</acronym>
        <description>An autosomal recessive male infertility disorder characterized by non-obstructive azoospermia due to primary spermatogenic arrest.</description>
        <dbReference type="MIM" id="620547"/>
    </disease>
    <text>The disease is caused by variants affecting the gene represented in this entry.</text>
</comment>
<comment type="disease" evidence="7 9 10">
    <disease id="DI-06782">
        <name>Premature ovarian failure 22</name>
        <acronym>POF22</acronym>
        <description>A form of premature ovarian failure, an ovarian disorder defined as the cessation of ovarian function under the age of 40 years. It is characterized by oligomenorrhea or amenorrhea, in the presence of elevated levels of serum gonadotropins and low estradiol. POF22 is an autosomal recessive form characterized by infertility, and small to atrophic ovaries and no visible ovarian follicles.</description>
        <dbReference type="MIM" id="620548"/>
    </disease>
    <text>The disease is caused by variants affecting the gene represented in this entry.</text>
</comment>
<dbReference type="EMBL" id="AK057220">
    <property type="protein sequence ID" value="BAB71384.1"/>
    <property type="molecule type" value="mRNA"/>
</dbReference>
<dbReference type="EMBL" id="AC010619">
    <property type="status" value="NOT_ANNOTATED_CDS"/>
    <property type="molecule type" value="Genomic_DNA"/>
</dbReference>
<dbReference type="EMBL" id="AC010643">
    <property type="status" value="NOT_ANNOTATED_CDS"/>
    <property type="molecule type" value="Genomic_DNA"/>
</dbReference>
<dbReference type="EMBL" id="CH471177">
    <property type="protein sequence ID" value="EAW52478.1"/>
    <property type="molecule type" value="Genomic_DNA"/>
</dbReference>
<dbReference type="EMBL" id="BC029811">
    <property type="protein sequence ID" value="AAH29811.1"/>
    <property type="molecule type" value="mRNA"/>
</dbReference>
<dbReference type="CCDS" id="CCDS46140.1"/>
<dbReference type="RefSeq" id="NP_653289.3">
    <property type="nucleotide sequence ID" value="NM_144688.4"/>
</dbReference>
<dbReference type="PDB" id="6R2I">
    <property type="method" value="X-ray"/>
    <property type="resolution" value="1.54 A"/>
    <property type="chains" value="B=542-562"/>
</dbReference>
<dbReference type="PDB" id="6WMF">
    <property type="method" value="X-ray"/>
    <property type="resolution" value="2.60 A"/>
    <property type="chains" value="B=542-562"/>
</dbReference>
<dbReference type="PDBsum" id="6R2I"/>
<dbReference type="PDBsum" id="6WMF"/>
<dbReference type="SASBDB" id="Q8N6L0"/>
<dbReference type="SMR" id="Q8N6L0"/>
<dbReference type="BioGRID" id="127094">
    <property type="interactions" value="155"/>
</dbReference>
<dbReference type="ComplexPortal" id="CPX-2537">
    <property type="entry name" value="LINC complex, SUN1-KASH5 variant"/>
</dbReference>
<dbReference type="ComplexPortal" id="CPX-7666">
    <property type="entry name" value="LINC complex, SUN2-KASH5 variant"/>
</dbReference>
<dbReference type="FunCoup" id="Q8N6L0">
    <property type="interactions" value="38"/>
</dbReference>
<dbReference type="IntAct" id="Q8N6L0">
    <property type="interactions" value="118"/>
</dbReference>
<dbReference type="MINT" id="Q8N6L0"/>
<dbReference type="STRING" id="9606.ENSP00000404220"/>
<dbReference type="GlyCosmos" id="Q8N6L0">
    <property type="glycosylation" value="1 site, 1 glycan"/>
</dbReference>
<dbReference type="GlyGen" id="Q8N6L0">
    <property type="glycosylation" value="2 sites, 1 O-linked glycan (1 site)"/>
</dbReference>
<dbReference type="iPTMnet" id="Q8N6L0"/>
<dbReference type="BioMuta" id="CCDC155"/>
<dbReference type="DMDM" id="187671940"/>
<dbReference type="jPOST" id="Q8N6L0"/>
<dbReference type="MassIVE" id="Q8N6L0"/>
<dbReference type="PaxDb" id="9606-ENSP00000404220"/>
<dbReference type="PeptideAtlas" id="Q8N6L0"/>
<dbReference type="ProteomicsDB" id="72187"/>
<dbReference type="Antibodypedia" id="9176">
    <property type="antibodies" value="60 antibodies from 17 providers"/>
</dbReference>
<dbReference type="DNASU" id="147872"/>
<dbReference type="Ensembl" id="ENST00000447857.8">
    <property type="protein sequence ID" value="ENSP00000404220.2"/>
    <property type="gene ID" value="ENSG00000161609.10"/>
</dbReference>
<dbReference type="GeneID" id="147872"/>
<dbReference type="KEGG" id="hsa:147872"/>
<dbReference type="MANE-Select" id="ENST00000447857.8">
    <property type="protein sequence ID" value="ENSP00000404220.2"/>
    <property type="RefSeq nucleotide sequence ID" value="NM_144688.5"/>
    <property type="RefSeq protein sequence ID" value="NP_653289.3"/>
</dbReference>
<dbReference type="UCSC" id="uc002pnm.3">
    <property type="organism name" value="human"/>
</dbReference>
<dbReference type="AGR" id="HGNC:26520"/>
<dbReference type="CTD" id="147872"/>
<dbReference type="DisGeNET" id="147872"/>
<dbReference type="GeneCards" id="KASH5"/>
<dbReference type="HGNC" id="HGNC:26520">
    <property type="gene designation" value="KASH5"/>
</dbReference>
<dbReference type="HPA" id="ENSG00000161609">
    <property type="expression patterns" value="Tissue enriched (testis)"/>
</dbReference>
<dbReference type="MalaCards" id="KASH5"/>
<dbReference type="MIM" id="618125">
    <property type="type" value="gene"/>
</dbReference>
<dbReference type="MIM" id="620547">
    <property type="type" value="phenotype"/>
</dbReference>
<dbReference type="MIM" id="620548">
    <property type="type" value="phenotype"/>
</dbReference>
<dbReference type="neXtProt" id="NX_Q8N6L0"/>
<dbReference type="OpenTargets" id="ENSG00000161609"/>
<dbReference type="PharmGKB" id="PA162381684"/>
<dbReference type="VEuPathDB" id="HostDB:ENSG00000161609"/>
<dbReference type="eggNOG" id="ENOG502RXNC">
    <property type="taxonomic scope" value="Eukaryota"/>
</dbReference>
<dbReference type="GeneTree" id="ENSGT00420000029926"/>
<dbReference type="InParanoid" id="Q8N6L0"/>
<dbReference type="OMA" id="KRQLCEC"/>
<dbReference type="OrthoDB" id="9943648at2759"/>
<dbReference type="PAN-GO" id="Q8N6L0">
    <property type="GO annotations" value="13 GO annotations based on evolutionary models"/>
</dbReference>
<dbReference type="PhylomeDB" id="Q8N6L0"/>
<dbReference type="TreeFam" id="TF337560"/>
<dbReference type="PathwayCommons" id="Q8N6L0"/>
<dbReference type="SignaLink" id="Q8N6L0"/>
<dbReference type="SIGNOR" id="Q8N6L0"/>
<dbReference type="BioGRID-ORCS" id="147872">
    <property type="hits" value="8 hits in 1144 CRISPR screens"/>
</dbReference>
<dbReference type="ChiTaRS" id="CCDC155">
    <property type="organism name" value="human"/>
</dbReference>
<dbReference type="GenomeRNAi" id="147872"/>
<dbReference type="Pharos" id="Q8N6L0">
    <property type="development level" value="Tbio"/>
</dbReference>
<dbReference type="PRO" id="PR:Q8N6L0"/>
<dbReference type="Proteomes" id="UP000005640">
    <property type="component" value="Chromosome 19"/>
</dbReference>
<dbReference type="RNAct" id="Q8N6L0">
    <property type="molecule type" value="protein"/>
</dbReference>
<dbReference type="Bgee" id="ENSG00000161609">
    <property type="expression patterns" value="Expressed in right testis and 94 other cell types or tissues"/>
</dbReference>
<dbReference type="ExpressionAtlas" id="Q8N6L0">
    <property type="expression patterns" value="baseline and differential"/>
</dbReference>
<dbReference type="GO" id="GO:0000781">
    <property type="term" value="C:chromosome, telomeric region"/>
    <property type="evidence" value="ECO:0000250"/>
    <property type="project" value="UniProtKB"/>
</dbReference>
<dbReference type="GO" id="GO:0000800">
    <property type="term" value="C:lateral element"/>
    <property type="evidence" value="ECO:0000318"/>
    <property type="project" value="GO_Central"/>
</dbReference>
<dbReference type="GO" id="GO:0034993">
    <property type="term" value="C:meiotic nuclear membrane microtubule tethering complex"/>
    <property type="evidence" value="ECO:0000318"/>
    <property type="project" value="GO_Central"/>
</dbReference>
<dbReference type="GO" id="GO:0090619">
    <property type="term" value="C:meiotic spindle pole"/>
    <property type="evidence" value="ECO:0000318"/>
    <property type="project" value="GO_Central"/>
</dbReference>
<dbReference type="GO" id="GO:0005640">
    <property type="term" value="C:nuclear outer membrane"/>
    <property type="evidence" value="ECO:0000318"/>
    <property type="project" value="GO_Central"/>
</dbReference>
<dbReference type="GO" id="GO:0070840">
    <property type="term" value="F:dynein complex binding"/>
    <property type="evidence" value="ECO:0000318"/>
    <property type="project" value="GO_Central"/>
</dbReference>
<dbReference type="GO" id="GO:0042802">
    <property type="term" value="F:identical protein binding"/>
    <property type="evidence" value="ECO:0007669"/>
    <property type="project" value="Ensembl"/>
</dbReference>
<dbReference type="GO" id="GO:0007015">
    <property type="term" value="P:actin filament organization"/>
    <property type="evidence" value="ECO:0000318"/>
    <property type="project" value="GO_Central"/>
</dbReference>
<dbReference type="GO" id="GO:0090220">
    <property type="term" value="P:chromosome localization to nuclear envelope involved in homologous chromosome segregation"/>
    <property type="evidence" value="ECO:0000318"/>
    <property type="project" value="GO_Central"/>
</dbReference>
<dbReference type="GO" id="GO:0000724">
    <property type="term" value="P:double-strand break repair via homologous recombination"/>
    <property type="evidence" value="ECO:0007669"/>
    <property type="project" value="Ensembl"/>
</dbReference>
<dbReference type="GO" id="GO:0007129">
    <property type="term" value="P:homologous chromosome pairing at meiosis"/>
    <property type="evidence" value="ECO:0000318"/>
    <property type="project" value="GO_Central"/>
</dbReference>
<dbReference type="GO" id="GO:0045141">
    <property type="term" value="P:meiotic telomere clustering"/>
    <property type="evidence" value="ECO:0007669"/>
    <property type="project" value="Ensembl"/>
</dbReference>
<dbReference type="GO" id="GO:0048477">
    <property type="term" value="P:oogenesis"/>
    <property type="evidence" value="ECO:0007669"/>
    <property type="project" value="Ensembl"/>
</dbReference>
<dbReference type="GO" id="GO:0007283">
    <property type="term" value="P:spermatogenesis"/>
    <property type="evidence" value="ECO:0007669"/>
    <property type="project" value="Ensembl"/>
</dbReference>
<dbReference type="GO" id="GO:0051225">
    <property type="term" value="P:spindle assembly"/>
    <property type="evidence" value="ECO:0000318"/>
    <property type="project" value="GO_Central"/>
</dbReference>
<dbReference type="GO" id="GO:0051653">
    <property type="term" value="P:spindle localization"/>
    <property type="evidence" value="ECO:0000318"/>
    <property type="project" value="GO_Central"/>
</dbReference>
<dbReference type="GO" id="GO:0034397">
    <property type="term" value="P:telomere localization"/>
    <property type="evidence" value="ECO:0000318"/>
    <property type="project" value="GO_Central"/>
</dbReference>
<dbReference type="InterPro" id="IPR011992">
    <property type="entry name" value="EF-hand-dom_pair"/>
</dbReference>
<dbReference type="InterPro" id="IPR028170">
    <property type="entry name" value="KASH5"/>
</dbReference>
<dbReference type="InterPro" id="IPR028168">
    <property type="entry name" value="KASH5_coiled-coil"/>
</dbReference>
<dbReference type="InterPro" id="IPR039508">
    <property type="entry name" value="KASH5_EF-hand-like_dom"/>
</dbReference>
<dbReference type="PANTHER" id="PTHR47300">
    <property type="entry name" value="PROTEIN KASH5"/>
    <property type="match status" value="1"/>
</dbReference>
<dbReference type="PANTHER" id="PTHR47300:SF1">
    <property type="entry name" value="PROTEIN KASH5"/>
    <property type="match status" value="1"/>
</dbReference>
<dbReference type="Pfam" id="PF14658">
    <property type="entry name" value="EF-hand_9"/>
    <property type="match status" value="1"/>
</dbReference>
<dbReference type="Pfam" id="PF14662">
    <property type="entry name" value="KASH_CCD"/>
    <property type="match status" value="1"/>
</dbReference>
<dbReference type="SUPFAM" id="SSF47473">
    <property type="entry name" value="EF-hand"/>
    <property type="match status" value="1"/>
</dbReference>
<organism>
    <name type="scientific">Homo sapiens</name>
    <name type="common">Human</name>
    <dbReference type="NCBI Taxonomy" id="9606"/>
    <lineage>
        <taxon>Eukaryota</taxon>
        <taxon>Metazoa</taxon>
        <taxon>Chordata</taxon>
        <taxon>Craniata</taxon>
        <taxon>Vertebrata</taxon>
        <taxon>Euteleostomi</taxon>
        <taxon>Mammalia</taxon>
        <taxon>Eutheria</taxon>
        <taxon>Euarchontoglires</taxon>
        <taxon>Primates</taxon>
        <taxon>Haplorrhini</taxon>
        <taxon>Catarrhini</taxon>
        <taxon>Hominidae</taxon>
        <taxon>Homo</taxon>
    </lineage>
</organism>
<keyword id="KW-0002">3D-structure</keyword>
<keyword id="KW-0158">Chromosome</keyword>
<keyword id="KW-0175">Coiled coil</keyword>
<keyword id="KW-0225">Disease variant</keyword>
<keyword id="KW-0469">Meiosis</keyword>
<keyword id="KW-0472">Membrane</keyword>
<keyword id="KW-0539">Nucleus</keyword>
<keyword id="KW-1066">Premature ovarian failure</keyword>
<keyword id="KW-1267">Proteomics identification</keyword>
<keyword id="KW-1185">Reference proteome</keyword>
<keyword id="KW-0779">Telomere</keyword>
<keyword id="KW-0812">Transmembrane</keyword>
<keyword id="KW-1133">Transmembrane helix</keyword>
<accession>Q8N6L0</accession>
<accession>Q96MC3</accession>
<proteinExistence type="evidence at protein level"/>
<evidence type="ECO:0000250" key="1"/>
<evidence type="ECO:0000250" key="2">
    <source>
        <dbReference type="UniProtKB" id="Q80VJ8"/>
    </source>
</evidence>
<evidence type="ECO:0000255" key="3"/>
<evidence type="ECO:0000256" key="4">
    <source>
        <dbReference type="SAM" id="MobiDB-lite"/>
    </source>
</evidence>
<evidence type="ECO:0000269" key="5">
    <source>
    </source>
</evidence>
<evidence type="ECO:0000269" key="6">
    <source>
    </source>
</evidence>
<evidence type="ECO:0000269" key="7">
    <source>
    </source>
</evidence>
<evidence type="ECO:0000269" key="8">
    <source>
    </source>
</evidence>
<evidence type="ECO:0000269" key="9">
    <source>
    </source>
</evidence>
<evidence type="ECO:0000269" key="10">
    <source>
    </source>
</evidence>
<evidence type="ECO:0000305" key="11"/>
<evidence type="ECO:0000312" key="12">
    <source>
        <dbReference type="HGNC" id="HGNC:26520"/>
    </source>
</evidence>
<evidence type="ECO:0007829" key="13">
    <source>
        <dbReference type="PDB" id="6WMF"/>
    </source>
</evidence>